<dbReference type="EMBL" id="BA000019">
    <property type="protein sequence ID" value="BAB75724.1"/>
    <property type="molecule type" value="Genomic_DNA"/>
</dbReference>
<dbReference type="PIR" id="AB2309">
    <property type="entry name" value="AB2309"/>
</dbReference>
<dbReference type="RefSeq" id="WP_010998165.1">
    <property type="nucleotide sequence ID" value="NZ_RSCN01000023.1"/>
</dbReference>
<dbReference type="SMR" id="Q8YQ15"/>
<dbReference type="STRING" id="103690.gene:10496068"/>
<dbReference type="KEGG" id="ana:all4025"/>
<dbReference type="eggNOG" id="COG2814">
    <property type="taxonomic scope" value="Bacteria"/>
</dbReference>
<dbReference type="OrthoDB" id="9787815at2"/>
<dbReference type="Proteomes" id="UP000002483">
    <property type="component" value="Chromosome"/>
</dbReference>
<dbReference type="GO" id="GO:0005886">
    <property type="term" value="C:plasma membrane"/>
    <property type="evidence" value="ECO:0000314"/>
    <property type="project" value="UniProtKB"/>
</dbReference>
<dbReference type="GO" id="GO:0022857">
    <property type="term" value="F:transmembrane transporter activity"/>
    <property type="evidence" value="ECO:0007669"/>
    <property type="project" value="InterPro"/>
</dbReference>
<dbReference type="GO" id="GO:0044718">
    <property type="term" value="P:siderophore transmembrane transport"/>
    <property type="evidence" value="ECO:0000315"/>
    <property type="project" value="UniProtKB"/>
</dbReference>
<dbReference type="CDD" id="cd17485">
    <property type="entry name" value="MFS_MFSD3"/>
    <property type="match status" value="1"/>
</dbReference>
<dbReference type="Gene3D" id="1.20.1250.20">
    <property type="entry name" value="MFS general substrate transporter like domains"/>
    <property type="match status" value="2"/>
</dbReference>
<dbReference type="InterPro" id="IPR004752">
    <property type="entry name" value="AmpG_permease/AT-1"/>
</dbReference>
<dbReference type="InterPro" id="IPR011701">
    <property type="entry name" value="MFS"/>
</dbReference>
<dbReference type="InterPro" id="IPR020846">
    <property type="entry name" value="MFS_dom"/>
</dbReference>
<dbReference type="InterPro" id="IPR036259">
    <property type="entry name" value="MFS_trans_sf"/>
</dbReference>
<dbReference type="PANTHER" id="PTHR12778:SF10">
    <property type="entry name" value="MAJOR FACILITATOR SUPERFAMILY DOMAIN-CONTAINING PROTEIN 3"/>
    <property type="match status" value="1"/>
</dbReference>
<dbReference type="PANTHER" id="PTHR12778">
    <property type="entry name" value="SOLUTE CARRIER FAMILY 33 ACETYL-COA TRANSPORTER -RELATED"/>
    <property type="match status" value="1"/>
</dbReference>
<dbReference type="Pfam" id="PF07690">
    <property type="entry name" value="MFS_1"/>
    <property type="match status" value="1"/>
</dbReference>
<dbReference type="SUPFAM" id="SSF103473">
    <property type="entry name" value="MFS general substrate transporter"/>
    <property type="match status" value="1"/>
</dbReference>
<dbReference type="PROSITE" id="PS50850">
    <property type="entry name" value="MFS"/>
    <property type="match status" value="1"/>
</dbReference>
<accession>Q8YQ15</accession>
<protein>
    <recommendedName>
        <fullName evidence="3">Schizokinen exporter SchE</fullName>
    </recommendedName>
</protein>
<evidence type="ECO:0000255" key="1"/>
<evidence type="ECO:0000269" key="2">
    <source>
    </source>
</evidence>
<evidence type="ECO:0000303" key="3">
    <source>
    </source>
</evidence>
<evidence type="ECO:0000305" key="4"/>
<evidence type="ECO:0000305" key="5">
    <source>
    </source>
</evidence>
<evidence type="ECO:0000312" key="6">
    <source>
        <dbReference type="EMBL" id="BAB75724.1"/>
    </source>
</evidence>
<evidence type="ECO:0000312" key="7">
    <source>
        <dbReference type="Proteomes" id="UP000002483"/>
    </source>
</evidence>
<reference evidence="6 7" key="1">
    <citation type="journal article" date="2001" name="DNA Res.">
        <title>Complete genomic sequence of the filamentous nitrogen-fixing cyanobacterium Anabaena sp. strain PCC 7120.</title>
        <authorList>
            <person name="Kaneko T."/>
            <person name="Nakamura Y."/>
            <person name="Wolk C.P."/>
            <person name="Kuritz T."/>
            <person name="Sasamoto S."/>
            <person name="Watanabe A."/>
            <person name="Iriguchi M."/>
            <person name="Ishikawa A."/>
            <person name="Kawashima K."/>
            <person name="Kimura T."/>
            <person name="Kishida Y."/>
            <person name="Kohara M."/>
            <person name="Matsumoto M."/>
            <person name="Matsuno A."/>
            <person name="Muraki A."/>
            <person name="Nakazaki N."/>
            <person name="Shimpo S."/>
            <person name="Sugimoto M."/>
            <person name="Takazawa M."/>
            <person name="Yamada M."/>
            <person name="Yasuda M."/>
            <person name="Tabata S."/>
        </authorList>
    </citation>
    <scope>NUCLEOTIDE SEQUENCE [LARGE SCALE GENOMIC DNA]</scope>
    <source>
        <strain evidence="7">PCC 7120 / SAG 25.82 / UTEX 2576</strain>
    </source>
</reference>
<reference key="2">
    <citation type="journal article" date="2010" name="Biochim. Biophys. Acta">
        <title>The interplay between siderophore secretion and coupled iron and copper transport in the heterocyst-forming cyanobacterium Anabaena sp. PCC 7120.</title>
        <authorList>
            <person name="Nicolaisen K."/>
            <person name="Hahn A."/>
            <person name="Valdebenito M."/>
            <person name="Moslavac S."/>
            <person name="Samborski A."/>
            <person name="Maldener I."/>
            <person name="Wilken C."/>
            <person name="Valladares A."/>
            <person name="Flores E."/>
            <person name="Hantke K."/>
            <person name="Schleiff E."/>
        </authorList>
    </citation>
    <scope>FUNCTION</scope>
    <scope>INDUCTION</scope>
    <scope>DISRUPTION PHENOTYPE</scope>
</reference>
<proteinExistence type="evidence at transcript level"/>
<comment type="function">
    <text evidence="2">Involved in the TolC-like protein HgdD-dependent secretion of schizokinen, a dihydroxamate-type siderophore. Transports schizokinen from the cytoplasm to the periplasm.</text>
</comment>
<comment type="subcellular location">
    <subcellularLocation>
        <location evidence="5">Cell inner membrane</location>
        <topology evidence="1">Multi-pass membrane protein</topology>
    </subcellularLocation>
</comment>
<comment type="induction">
    <text evidence="2">Expression is not affected by the presence or absence of iron or copper under normal or micro-oxic conditions.</text>
</comment>
<comment type="disruption phenotype">
    <text evidence="2">No secretion of hydroxamate siderophores. More sensitive to high iron and copper concentrations than the wild-type. Impaired growth in the presence of either 500 uM ferric ammonium citrate (FeACi) and 0.5 uM CuSO4 or 1000 uM FeACi and 1 uM CuSO4.</text>
</comment>
<comment type="similarity">
    <text evidence="4">Belongs to the major facilitator superfamily.</text>
</comment>
<feature type="signal peptide" evidence="1">
    <location>
        <begin position="1"/>
        <end position="25"/>
    </location>
</feature>
<feature type="chain" id="PRO_0000458441" description="Schizokinen exporter SchE" evidence="1">
    <location>
        <begin position="26"/>
        <end position="396"/>
    </location>
</feature>
<feature type="topological domain" description="Cytoplasmic" evidence="4">
    <location>
        <begin position="26"/>
        <end position="39"/>
    </location>
</feature>
<feature type="transmembrane region" description="Helical" evidence="1">
    <location>
        <begin position="40"/>
        <end position="60"/>
    </location>
</feature>
<feature type="topological domain" description="Periplasmic" evidence="4">
    <location>
        <begin position="61"/>
        <end position="73"/>
    </location>
</feature>
<feature type="transmembrane region" description="Helical" evidence="1">
    <location>
        <begin position="74"/>
        <end position="94"/>
    </location>
</feature>
<feature type="topological domain" description="Cytoplasmic" evidence="4">
    <location>
        <begin position="95"/>
        <end position="104"/>
    </location>
</feature>
<feature type="transmembrane region" description="Helical" evidence="1">
    <location>
        <begin position="105"/>
        <end position="127"/>
    </location>
</feature>
<feature type="topological domain" description="Periplasmic" evidence="4">
    <location>
        <begin position="128"/>
        <end position="137"/>
    </location>
</feature>
<feature type="transmembrane region" description="Helical" evidence="1">
    <location>
        <begin position="138"/>
        <end position="158"/>
    </location>
</feature>
<feature type="topological domain" description="Cytoplasmic" evidence="4">
    <location>
        <begin position="159"/>
        <end position="162"/>
    </location>
</feature>
<feature type="transmembrane region" description="Helical" evidence="1">
    <location>
        <begin position="163"/>
        <end position="183"/>
    </location>
</feature>
<feature type="topological domain" description="Periplasmic" evidence="4">
    <location>
        <begin position="184"/>
        <end position="214"/>
    </location>
</feature>
<feature type="transmembrane region" description="Helical" evidence="1">
    <location>
        <begin position="215"/>
        <end position="235"/>
    </location>
</feature>
<feature type="topological domain" description="Cytoplasmic" evidence="4">
    <location>
        <begin position="236"/>
        <end position="251"/>
    </location>
</feature>
<feature type="transmembrane region" description="Helical" evidence="1">
    <location>
        <begin position="252"/>
        <end position="272"/>
    </location>
</feature>
<feature type="topological domain" description="Periplasmic" evidence="4">
    <location>
        <begin position="273"/>
        <end position="281"/>
    </location>
</feature>
<feature type="transmembrane region" description="Helical" evidence="1">
    <location>
        <begin position="282"/>
        <end position="302"/>
    </location>
</feature>
<feature type="topological domain" description="Cytoplasmic" evidence="4">
    <location>
        <begin position="303"/>
        <end position="304"/>
    </location>
</feature>
<feature type="transmembrane region" description="Helical" evidence="1">
    <location>
        <begin position="305"/>
        <end position="325"/>
    </location>
</feature>
<feature type="topological domain" description="Periplasmic" evidence="4">
    <location>
        <begin position="326"/>
        <end position="346"/>
    </location>
</feature>
<feature type="transmembrane region" description="Helical" evidence="1">
    <location>
        <begin position="347"/>
        <end position="367"/>
    </location>
</feature>
<feature type="transmembrane region" description="Helical" evidence="1">
    <location>
        <begin position="368"/>
        <end position="388"/>
    </location>
</feature>
<feature type="topological domain" description="Periplasmic" evidence="4">
    <location>
        <begin position="389"/>
        <end position="396"/>
    </location>
</feature>
<keyword id="KW-0997">Cell inner membrane</keyword>
<keyword id="KW-1003">Cell membrane</keyword>
<keyword id="KW-0472">Membrane</keyword>
<keyword id="KW-1185">Reference proteome</keyword>
<keyword id="KW-0732">Signal</keyword>
<keyword id="KW-0812">Transmembrane</keyword>
<keyword id="KW-1133">Transmembrane helix</keyword>
<keyword id="KW-0813">Transport</keyword>
<name>SCHE_NOSS1</name>
<gene>
    <name evidence="3" type="primary">schE</name>
    <name evidence="6" type="ordered locus">all4025</name>
</gene>
<sequence length="396" mass="43733">MLPKLILLATLYISQFIPTTFFIQALPVFMRQQKMSLDVIGFLGLLILPSGLKFLWSPFIDRYRLGKLGHYRGWIICFQLLLISTMLVTAFIDIQDNLNAFLTCMFLASLFSSSQDIATDALAVNLLEPQERGLGNAIQSGGNIFGAIIGGGVMLILLDKIGWRYSLITLSIFMLINLVPILIYREKSQHQLENSTFFRSYFQPFISFLSRPKALPWLFVVLLYMMGDSVTSLMIRPLLVDRGLSLPDIGWILGIVSYSARIVSALIAGLVIVKLGRIKSLIIFGFIADLTTLLYIIPAIGVSSLLVLYTVCIIVNATQSMAYTALLSAMMDKCEKNTAATDYTMQVSVMFLGGIAATVLSGMLATTMGYSFIFIMSAAVSLLSVFLITQEYGVSS</sequence>
<organism evidence="6 7">
    <name type="scientific">Nostoc sp. (strain PCC 7120 / SAG 25.82 / UTEX 2576)</name>
    <dbReference type="NCBI Taxonomy" id="103690"/>
    <lineage>
        <taxon>Bacteria</taxon>
        <taxon>Bacillati</taxon>
        <taxon>Cyanobacteriota</taxon>
        <taxon>Cyanophyceae</taxon>
        <taxon>Nostocales</taxon>
        <taxon>Nostocaceae</taxon>
        <taxon>Nostoc</taxon>
    </lineage>
</organism>